<proteinExistence type="inferred from homology"/>
<sequence length="361" mass="41355">MTLMFTSRTAVYCSNLTTQRSAVTILRTLSGTASNGIKSRSALTAYQQNPSLRTRNFHSTSVVQAKDFFPEPDTPHIKKTKTAWPHPIYTVEQMNQVAVAHRDTRNWSDKVALIAVKLLRWGLDTVSGYKHGKAQALHAQDPQEAQKRYGMTGKQYLVRNVFLESVAGVPGMVAGMLRHLHSMRRMKRDHGWIETLLEESYNERMHLLIFLKLYEPGWFMRLAVLGAQGVFFNAMFLSYLISPRTCHRFVGYLEEEAVVTYTRELADLEAGKLPEWETLAAPDIAVDYYNLPEGHRTMKDLLLHVRADEAKHREVNHTLGNLDQNSDPNPYASKYDNPNVPHPRKDIKYLKPSGWEREEVM</sequence>
<feature type="transit peptide" description="Mitochondrion" evidence="3">
    <location>
        <begin position="1"/>
        <end status="unknown"/>
    </location>
</feature>
<feature type="chain" id="PRO_0000001728" description="Alternative oxidase, mitochondrial">
    <location>
        <begin status="unknown"/>
        <end position="361"/>
    </location>
</feature>
<feature type="transmembrane region" description="Helical" evidence="3">
    <location>
        <begin position="156"/>
        <end position="178"/>
    </location>
</feature>
<feature type="transmembrane region" description="Helical" evidence="3">
    <location>
        <begin position="218"/>
        <end position="240"/>
    </location>
</feature>
<feature type="region of interest" description="Disordered" evidence="4">
    <location>
        <begin position="318"/>
        <end position="361"/>
    </location>
</feature>
<feature type="compositionally biased region" description="Polar residues" evidence="4">
    <location>
        <begin position="318"/>
        <end position="328"/>
    </location>
</feature>
<feature type="compositionally biased region" description="Basic and acidic residues" evidence="4">
    <location>
        <begin position="343"/>
        <end position="361"/>
    </location>
</feature>
<feature type="binding site" evidence="2">
    <location>
        <position position="164"/>
    </location>
    <ligand>
        <name>Fe cation</name>
        <dbReference type="ChEBI" id="CHEBI:24875"/>
        <label>1</label>
    </ligand>
</feature>
<feature type="binding site" evidence="2">
    <location>
        <position position="203"/>
    </location>
    <ligand>
        <name>Fe cation</name>
        <dbReference type="ChEBI" id="CHEBI:24875"/>
        <label>1</label>
    </ligand>
</feature>
<feature type="binding site" evidence="2">
    <location>
        <position position="203"/>
    </location>
    <ligand>
        <name>Fe cation</name>
        <dbReference type="ChEBI" id="CHEBI:24875"/>
        <label>2</label>
    </ligand>
</feature>
<feature type="binding site" evidence="2">
    <location>
        <position position="206"/>
    </location>
    <ligand>
        <name>Fe cation</name>
        <dbReference type="ChEBI" id="CHEBI:24875"/>
        <label>1</label>
    </ligand>
</feature>
<feature type="binding site" evidence="2">
    <location>
        <position position="254"/>
    </location>
    <ligand>
        <name>Fe cation</name>
        <dbReference type="ChEBI" id="CHEBI:24875"/>
        <label>2</label>
    </ligand>
</feature>
<feature type="binding site" evidence="2">
    <location>
        <position position="309"/>
    </location>
    <ligand>
        <name>Fe cation</name>
        <dbReference type="ChEBI" id="CHEBI:24875"/>
        <label>1</label>
    </ligand>
</feature>
<feature type="binding site" evidence="2">
    <location>
        <position position="309"/>
    </location>
    <ligand>
        <name>Fe cation</name>
        <dbReference type="ChEBI" id="CHEBI:24875"/>
        <label>2</label>
    </ligand>
</feature>
<feature type="binding site" evidence="2">
    <location>
        <position position="312"/>
    </location>
    <ligand>
        <name>Fe cation</name>
        <dbReference type="ChEBI" id="CHEBI:24875"/>
        <label>2</label>
    </ligand>
</feature>
<feature type="sequence conflict" description="In Ref. 2; AAK61349." evidence="5" ref="2">
    <original>F</original>
    <variation>Y</variation>
    <location>
        <position position="5"/>
    </location>
</feature>
<feature type="sequence conflict" description="In Ref. 2; AAK61349." evidence="5" ref="2">
    <original>N</original>
    <variation>D</variation>
    <location>
        <position position="339"/>
    </location>
</feature>
<name>AOX_VENIN</name>
<gene>
    <name type="primary">AOX1</name>
</gene>
<evidence type="ECO:0000250" key="1"/>
<evidence type="ECO:0000250" key="2">
    <source>
        <dbReference type="UniProtKB" id="Q26710"/>
    </source>
</evidence>
<evidence type="ECO:0000255" key="3"/>
<evidence type="ECO:0000256" key="4">
    <source>
        <dbReference type="SAM" id="MobiDB-lite"/>
    </source>
</evidence>
<evidence type="ECO:0000305" key="5"/>
<accession>Q9P429</accession>
<accession>Q96W61</accession>
<keyword id="KW-0249">Electron transport</keyword>
<keyword id="KW-0408">Iron</keyword>
<keyword id="KW-0472">Membrane</keyword>
<keyword id="KW-0479">Metal-binding</keyword>
<keyword id="KW-0496">Mitochondrion</keyword>
<keyword id="KW-0999">Mitochondrion inner membrane</keyword>
<keyword id="KW-0560">Oxidoreductase</keyword>
<keyword id="KW-0679">Respiratory chain</keyword>
<keyword id="KW-0809">Transit peptide</keyword>
<keyword id="KW-0812">Transmembrane</keyword>
<keyword id="KW-1133">Transmembrane helix</keyword>
<keyword id="KW-0813">Transport</keyword>
<protein>
    <recommendedName>
        <fullName>Alternative oxidase, mitochondrial</fullName>
        <ecNumber>1.-.-.-</ecNumber>
    </recommendedName>
</protein>
<comment type="function">
    <text evidence="1">Catalyzes cyanide-resistant oxygen consumption. May increase respiration when the cytochrome respiratory pathway is restricted, or in response to low temperatures (By similarity).</text>
</comment>
<comment type="cofactor">
    <cofactor evidence="2">
        <name>Fe cation</name>
        <dbReference type="ChEBI" id="CHEBI:24875"/>
    </cofactor>
    <text evidence="2">Binds 2 iron ions per subunit.</text>
</comment>
<comment type="subcellular location">
    <subcellularLocation>
        <location evidence="1">Mitochondrion inner membrane</location>
        <topology evidence="1">Multi-pass membrane protein</topology>
        <orientation evidence="1">Matrix side</orientation>
    </subcellularLocation>
</comment>
<comment type="similarity">
    <text evidence="5">Belongs to the alternative oxidase family.</text>
</comment>
<reference key="1">
    <citation type="journal article" date="2001" name="Pest Manag. Sci.">
        <title>Sensitivity of mitochondrial respiration to different inhibitors in Venturia inaequalis.</title>
        <authorList>
            <person name="Steinfeld U."/>
            <person name="Sierotzki H."/>
            <person name="Parisi S."/>
            <person name="Poirey S."/>
            <person name="Gisi U."/>
        </authorList>
    </citation>
    <scope>NUCLEOTIDE SEQUENCE [GENOMIC DNA]</scope>
    <source>
        <strain>97.5.12.</strain>
    </source>
</reference>
<reference key="2">
    <citation type="book" date="2002" name="Modern fungicides and antifungal compounds III">
        <title>Molecular evidence for activation of the alternative respiratory pathway in Venturia inaequalis by strobilurin fungicides.</title>
        <editorList>
            <person name="Dehne H.-W."/>
            <person name="Gisi U."/>
            <person name="Kuck K.H."/>
            <person name="Russell P.E."/>
            <person name="Lyr H."/>
        </editorList>
        <authorList>
            <person name="Schnabel G."/>
            <person name="Jones A.L."/>
        </authorList>
    </citation>
    <scope>NUCLEOTIDE SEQUENCE [GENOMIC DNA] OF 4-361</scope>
    <source>
        <strain>Ent2</strain>
    </source>
</reference>
<dbReference type="EC" id="1.-.-.-"/>
<dbReference type="EMBL" id="AF279690">
    <property type="protein sequence ID" value="AAF87802.1"/>
    <property type="molecule type" value="Genomic_DNA"/>
</dbReference>
<dbReference type="EMBL" id="AF363785">
    <property type="protein sequence ID" value="AAK61349.1"/>
    <property type="molecule type" value="Genomic_DNA"/>
</dbReference>
<dbReference type="SMR" id="Q9P429"/>
<dbReference type="GO" id="GO:0005743">
    <property type="term" value="C:mitochondrial inner membrane"/>
    <property type="evidence" value="ECO:0007669"/>
    <property type="project" value="UniProtKB-SubCell"/>
</dbReference>
<dbReference type="GO" id="GO:0009916">
    <property type="term" value="F:alternative oxidase activity"/>
    <property type="evidence" value="ECO:0007669"/>
    <property type="project" value="InterPro"/>
</dbReference>
<dbReference type="GO" id="GO:0046872">
    <property type="term" value="F:metal ion binding"/>
    <property type="evidence" value="ECO:0007669"/>
    <property type="project" value="UniProtKB-KW"/>
</dbReference>
<dbReference type="GO" id="GO:0010230">
    <property type="term" value="P:alternative respiration"/>
    <property type="evidence" value="ECO:0007669"/>
    <property type="project" value="TreeGrafter"/>
</dbReference>
<dbReference type="CDD" id="cd01053">
    <property type="entry name" value="AOX"/>
    <property type="match status" value="1"/>
</dbReference>
<dbReference type="FunFam" id="1.20.1260.140:FF:000002">
    <property type="entry name" value="Alternative oxidase"/>
    <property type="match status" value="1"/>
</dbReference>
<dbReference type="Gene3D" id="1.20.1260.140">
    <property type="entry name" value="Alternative oxidase"/>
    <property type="match status" value="1"/>
</dbReference>
<dbReference type="InterPro" id="IPR002680">
    <property type="entry name" value="AOX"/>
</dbReference>
<dbReference type="InterPro" id="IPR038659">
    <property type="entry name" value="AOX_sf"/>
</dbReference>
<dbReference type="PANTHER" id="PTHR31803">
    <property type="entry name" value="ALTERNATIVE OXIDASE"/>
    <property type="match status" value="1"/>
</dbReference>
<dbReference type="PANTHER" id="PTHR31803:SF3">
    <property type="entry name" value="ALTERNATIVE OXIDASE"/>
    <property type="match status" value="1"/>
</dbReference>
<dbReference type="Pfam" id="PF01786">
    <property type="entry name" value="AOX"/>
    <property type="match status" value="1"/>
</dbReference>
<dbReference type="PIRSF" id="PIRSF005229">
    <property type="entry name" value="AOX"/>
    <property type="match status" value="1"/>
</dbReference>
<organism>
    <name type="scientific">Venturia inaequalis</name>
    <name type="common">Apple scab fungus</name>
    <dbReference type="NCBI Taxonomy" id="5025"/>
    <lineage>
        <taxon>Eukaryota</taxon>
        <taxon>Fungi</taxon>
        <taxon>Dikarya</taxon>
        <taxon>Ascomycota</taxon>
        <taxon>Pezizomycotina</taxon>
        <taxon>Dothideomycetes</taxon>
        <taxon>Pleosporomycetidae</taxon>
        <taxon>Venturiales</taxon>
        <taxon>Venturiaceae</taxon>
        <taxon>Venturia</taxon>
    </lineage>
</organism>